<name>SYI_ECOUT</name>
<sequence length="938" mass="104354">MSDYKSTLNLPETGFPMRGDLAKREPGMLARWTDDDLYGIIRAAKKGKKTFILHDGPPYANGSIHIGHSVNKILKDIIIKSKGLSGYDSPYVPGWDCHGLPIELKVEQEYGKPGEKFTAAEFRAKCREYAATQVDGQRKDFIRLGVLGDWSHPYLTMDFKTEANIIRALGKIIGNGHLHKGAKPVHWCVDCRSALAEAEVEYYDKTSPSIDVAFLAVDQDALKTKFGVSNVNGPISLVIWTTTPWTLPANRAISIAPDFDYALVQIDGQAVILAKDLVESVMQRIGVSDYTILGTVKGAELELLRFTHPFMDFDVPAILGDHVTLDAGTGAVHTAPGHGPDDYVIGQKYGLETANPVGPDGTYLPGTYPTLDGVNVFKANDIVIALLQEKGALLHVEKMQHSYPCCWRHKTPIIFRATPQWFVSMDQKGLRAQSLKEIKGVQWIPDWGQARIESMVANRPDWCISRQRTWGVPMSLFVHKDTEELHPRTLELMEEVAKRVEVDGIQAWWDLDAKEILGDEADQYVKVPDTLDVWFDSGSTHSSVVDVRPEFAGHAADMYLEGSDQHRGWFMSSLMISTAMKGKAPYRQVLTHGFTVDGQGRKMSKSIGNTVSPQDVMNKLGADILRLWVASTDYTGEMAVSDEILKRAADSYRRIRNTARFLLANLNGFDPAKDMVKPEEMVVLDRWAVGCAKAAQEDILKAYEAYDFHEVVQRLMRFCSVEMGSFYLDIIKDRQYTAKADSVARRSCQTALYHIAEALVRWMAPILSFTADEVWGYLPGEREKYVFTGEWYEGLFGLADSEAMNDAFWDELLKVRGEVNKVIEQARADKKVGGSLEAAVTLYAEPELAAKLTALGDELRFVLLTSGATVADYNDAPADAQQSEVLKGLKVALSKAEGEKCPRCWHYTQDVGKVAEHAEICGRCVSNVAGDGEKRKFA</sequence>
<gene>
    <name evidence="1" type="primary">ileS</name>
    <name type="ordered locus">UTI89_C0028</name>
</gene>
<keyword id="KW-0007">Acetylation</keyword>
<keyword id="KW-0030">Aminoacyl-tRNA synthetase</keyword>
<keyword id="KW-0067">ATP-binding</keyword>
<keyword id="KW-0963">Cytoplasm</keyword>
<keyword id="KW-0436">Ligase</keyword>
<keyword id="KW-0479">Metal-binding</keyword>
<keyword id="KW-0547">Nucleotide-binding</keyword>
<keyword id="KW-0648">Protein biosynthesis</keyword>
<keyword id="KW-0862">Zinc</keyword>
<accession>Q1RGH6</accession>
<comment type="function">
    <text evidence="1">Catalyzes the attachment of isoleucine to tRNA(Ile). As IleRS can inadvertently accommodate and process structurally similar amino acids such as valine, to avoid such errors it has two additional distinct tRNA(Ile)-dependent editing activities. One activity is designated as 'pretransfer' editing and involves the hydrolysis of activated Val-AMP. The other activity is designated 'posttransfer' editing and involves deacylation of mischarged Val-tRNA(Ile).</text>
</comment>
<comment type="catalytic activity">
    <reaction evidence="1">
        <text>tRNA(Ile) + L-isoleucine + ATP = L-isoleucyl-tRNA(Ile) + AMP + diphosphate</text>
        <dbReference type="Rhea" id="RHEA:11060"/>
        <dbReference type="Rhea" id="RHEA-COMP:9666"/>
        <dbReference type="Rhea" id="RHEA-COMP:9695"/>
        <dbReference type="ChEBI" id="CHEBI:30616"/>
        <dbReference type="ChEBI" id="CHEBI:33019"/>
        <dbReference type="ChEBI" id="CHEBI:58045"/>
        <dbReference type="ChEBI" id="CHEBI:78442"/>
        <dbReference type="ChEBI" id="CHEBI:78528"/>
        <dbReference type="ChEBI" id="CHEBI:456215"/>
        <dbReference type="EC" id="6.1.1.5"/>
    </reaction>
</comment>
<comment type="cofactor">
    <cofactor evidence="1">
        <name>Zn(2+)</name>
        <dbReference type="ChEBI" id="CHEBI:29105"/>
    </cofactor>
    <text evidence="1">Binds 1 zinc ion per subunit.</text>
</comment>
<comment type="subunit">
    <text evidence="1">Monomer.</text>
</comment>
<comment type="subcellular location">
    <subcellularLocation>
        <location evidence="1">Cytoplasm</location>
    </subcellularLocation>
</comment>
<comment type="domain">
    <text evidence="1">IleRS has two distinct active sites: one for aminoacylation and one for editing. The misactivated valine is translocated from the active site to the editing site, which sterically excludes the correctly activated isoleucine. The single editing site contains two valyl binding pockets, one specific for each substrate (Val-AMP or Val-tRNA(Ile)).</text>
</comment>
<comment type="similarity">
    <text evidence="1">Belongs to the class-I aminoacyl-tRNA synthetase family. IleS type 1 subfamily.</text>
</comment>
<evidence type="ECO:0000255" key="1">
    <source>
        <dbReference type="HAMAP-Rule" id="MF_02002"/>
    </source>
</evidence>
<proteinExistence type="inferred from homology"/>
<feature type="chain" id="PRO_1000022063" description="Isoleucine--tRNA ligase">
    <location>
        <begin position="1"/>
        <end position="938"/>
    </location>
</feature>
<feature type="short sequence motif" description="'HIGH' region">
    <location>
        <begin position="58"/>
        <end position="68"/>
    </location>
</feature>
<feature type="short sequence motif" description="'KMSKS' region">
    <location>
        <begin position="602"/>
        <end position="606"/>
    </location>
</feature>
<feature type="binding site" evidence="1">
    <location>
        <position position="561"/>
    </location>
    <ligand>
        <name>L-isoleucyl-5'-AMP</name>
        <dbReference type="ChEBI" id="CHEBI:178002"/>
    </ligand>
</feature>
<feature type="binding site" evidence="1">
    <location>
        <position position="605"/>
    </location>
    <ligand>
        <name>ATP</name>
        <dbReference type="ChEBI" id="CHEBI:30616"/>
    </ligand>
</feature>
<feature type="binding site" evidence="1">
    <location>
        <position position="901"/>
    </location>
    <ligand>
        <name>Zn(2+)</name>
        <dbReference type="ChEBI" id="CHEBI:29105"/>
    </ligand>
</feature>
<feature type="binding site" evidence="1">
    <location>
        <position position="904"/>
    </location>
    <ligand>
        <name>Zn(2+)</name>
        <dbReference type="ChEBI" id="CHEBI:29105"/>
    </ligand>
</feature>
<feature type="binding site" evidence="1">
    <location>
        <position position="921"/>
    </location>
    <ligand>
        <name>Zn(2+)</name>
        <dbReference type="ChEBI" id="CHEBI:29105"/>
    </ligand>
</feature>
<feature type="binding site" evidence="1">
    <location>
        <position position="924"/>
    </location>
    <ligand>
        <name>Zn(2+)</name>
        <dbReference type="ChEBI" id="CHEBI:29105"/>
    </ligand>
</feature>
<feature type="modified residue" description="N6-acetyllysine" evidence="1">
    <location>
        <position position="183"/>
    </location>
</feature>
<protein>
    <recommendedName>
        <fullName evidence="1">Isoleucine--tRNA ligase</fullName>
        <ecNumber evidence="1">6.1.1.5</ecNumber>
    </recommendedName>
    <alternativeName>
        <fullName evidence="1">Isoleucyl-tRNA synthetase</fullName>
        <shortName evidence="1">IleRS</shortName>
    </alternativeName>
</protein>
<organism>
    <name type="scientific">Escherichia coli (strain UTI89 / UPEC)</name>
    <dbReference type="NCBI Taxonomy" id="364106"/>
    <lineage>
        <taxon>Bacteria</taxon>
        <taxon>Pseudomonadati</taxon>
        <taxon>Pseudomonadota</taxon>
        <taxon>Gammaproteobacteria</taxon>
        <taxon>Enterobacterales</taxon>
        <taxon>Enterobacteriaceae</taxon>
        <taxon>Escherichia</taxon>
    </lineage>
</organism>
<reference key="1">
    <citation type="journal article" date="2006" name="Proc. Natl. Acad. Sci. U.S.A.">
        <title>Identification of genes subject to positive selection in uropathogenic strains of Escherichia coli: a comparative genomics approach.</title>
        <authorList>
            <person name="Chen S.L."/>
            <person name="Hung C.-S."/>
            <person name="Xu J."/>
            <person name="Reigstad C.S."/>
            <person name="Magrini V."/>
            <person name="Sabo A."/>
            <person name="Blasiar D."/>
            <person name="Bieri T."/>
            <person name="Meyer R.R."/>
            <person name="Ozersky P."/>
            <person name="Armstrong J.R."/>
            <person name="Fulton R.S."/>
            <person name="Latreille J.P."/>
            <person name="Spieth J."/>
            <person name="Hooton T.M."/>
            <person name="Mardis E.R."/>
            <person name="Hultgren S.J."/>
            <person name="Gordon J.I."/>
        </authorList>
    </citation>
    <scope>NUCLEOTIDE SEQUENCE [LARGE SCALE GENOMIC DNA]</scope>
    <source>
        <strain>UTI89 / UPEC</strain>
    </source>
</reference>
<dbReference type="EC" id="6.1.1.5" evidence="1"/>
<dbReference type="EMBL" id="CP000243">
    <property type="protein sequence ID" value="ABE05538.1"/>
    <property type="molecule type" value="Genomic_DNA"/>
</dbReference>
<dbReference type="RefSeq" id="WP_001286813.1">
    <property type="nucleotide sequence ID" value="NZ_CP064825.1"/>
</dbReference>
<dbReference type="SMR" id="Q1RGH6"/>
<dbReference type="KEGG" id="eci:UTI89_C0028"/>
<dbReference type="HOGENOM" id="CLU_001493_7_1_6"/>
<dbReference type="Proteomes" id="UP000001952">
    <property type="component" value="Chromosome"/>
</dbReference>
<dbReference type="GO" id="GO:0005829">
    <property type="term" value="C:cytosol"/>
    <property type="evidence" value="ECO:0007669"/>
    <property type="project" value="TreeGrafter"/>
</dbReference>
<dbReference type="GO" id="GO:0002161">
    <property type="term" value="F:aminoacyl-tRNA deacylase activity"/>
    <property type="evidence" value="ECO:0007669"/>
    <property type="project" value="InterPro"/>
</dbReference>
<dbReference type="GO" id="GO:0005524">
    <property type="term" value="F:ATP binding"/>
    <property type="evidence" value="ECO:0007669"/>
    <property type="project" value="UniProtKB-UniRule"/>
</dbReference>
<dbReference type="GO" id="GO:0004822">
    <property type="term" value="F:isoleucine-tRNA ligase activity"/>
    <property type="evidence" value="ECO:0007669"/>
    <property type="project" value="UniProtKB-UniRule"/>
</dbReference>
<dbReference type="GO" id="GO:0000049">
    <property type="term" value="F:tRNA binding"/>
    <property type="evidence" value="ECO:0007669"/>
    <property type="project" value="InterPro"/>
</dbReference>
<dbReference type="GO" id="GO:0008270">
    <property type="term" value="F:zinc ion binding"/>
    <property type="evidence" value="ECO:0007669"/>
    <property type="project" value="UniProtKB-UniRule"/>
</dbReference>
<dbReference type="GO" id="GO:0006428">
    <property type="term" value="P:isoleucyl-tRNA aminoacylation"/>
    <property type="evidence" value="ECO:0007669"/>
    <property type="project" value="UniProtKB-UniRule"/>
</dbReference>
<dbReference type="CDD" id="cd07960">
    <property type="entry name" value="Anticodon_Ia_Ile_BEm"/>
    <property type="match status" value="1"/>
</dbReference>
<dbReference type="CDD" id="cd00818">
    <property type="entry name" value="IleRS_core"/>
    <property type="match status" value="1"/>
</dbReference>
<dbReference type="FunFam" id="1.10.730.20:FF:000001">
    <property type="entry name" value="Isoleucine--tRNA ligase"/>
    <property type="match status" value="1"/>
</dbReference>
<dbReference type="FunFam" id="3.40.50.620:FF:000042">
    <property type="entry name" value="Isoleucine--tRNA ligase"/>
    <property type="match status" value="1"/>
</dbReference>
<dbReference type="FunFam" id="3.40.50.620:FF:000048">
    <property type="entry name" value="Isoleucine--tRNA ligase"/>
    <property type="match status" value="1"/>
</dbReference>
<dbReference type="FunFam" id="3.90.740.10:FF:000002">
    <property type="entry name" value="Isoleucine--tRNA ligase"/>
    <property type="match status" value="1"/>
</dbReference>
<dbReference type="Gene3D" id="1.10.730.20">
    <property type="match status" value="1"/>
</dbReference>
<dbReference type="Gene3D" id="3.40.50.620">
    <property type="entry name" value="HUPs"/>
    <property type="match status" value="2"/>
</dbReference>
<dbReference type="Gene3D" id="3.90.740.10">
    <property type="entry name" value="Valyl/Leucyl/Isoleucyl-tRNA synthetase, editing domain"/>
    <property type="match status" value="1"/>
</dbReference>
<dbReference type="HAMAP" id="MF_02002">
    <property type="entry name" value="Ile_tRNA_synth_type1"/>
    <property type="match status" value="1"/>
</dbReference>
<dbReference type="InterPro" id="IPR001412">
    <property type="entry name" value="aa-tRNA-synth_I_CS"/>
</dbReference>
<dbReference type="InterPro" id="IPR002300">
    <property type="entry name" value="aa-tRNA-synth_Ia"/>
</dbReference>
<dbReference type="InterPro" id="IPR033708">
    <property type="entry name" value="Anticodon_Ile_BEm"/>
</dbReference>
<dbReference type="InterPro" id="IPR002301">
    <property type="entry name" value="Ile-tRNA-ligase"/>
</dbReference>
<dbReference type="InterPro" id="IPR023585">
    <property type="entry name" value="Ile-tRNA-ligase_type1"/>
</dbReference>
<dbReference type="InterPro" id="IPR050081">
    <property type="entry name" value="Ile-tRNA_ligase"/>
</dbReference>
<dbReference type="InterPro" id="IPR013155">
    <property type="entry name" value="M/V/L/I-tRNA-synth_anticd-bd"/>
</dbReference>
<dbReference type="InterPro" id="IPR014729">
    <property type="entry name" value="Rossmann-like_a/b/a_fold"/>
</dbReference>
<dbReference type="InterPro" id="IPR009080">
    <property type="entry name" value="tRNAsynth_Ia_anticodon-bd"/>
</dbReference>
<dbReference type="InterPro" id="IPR009008">
    <property type="entry name" value="Val/Leu/Ile-tRNA-synth_edit"/>
</dbReference>
<dbReference type="InterPro" id="IPR010663">
    <property type="entry name" value="Znf_FPG/IleRS"/>
</dbReference>
<dbReference type="NCBIfam" id="TIGR00392">
    <property type="entry name" value="ileS"/>
    <property type="match status" value="1"/>
</dbReference>
<dbReference type="PANTHER" id="PTHR42765:SF1">
    <property type="entry name" value="ISOLEUCINE--TRNA LIGASE, MITOCHONDRIAL"/>
    <property type="match status" value="1"/>
</dbReference>
<dbReference type="PANTHER" id="PTHR42765">
    <property type="entry name" value="SOLEUCYL-TRNA SYNTHETASE"/>
    <property type="match status" value="1"/>
</dbReference>
<dbReference type="Pfam" id="PF08264">
    <property type="entry name" value="Anticodon_1"/>
    <property type="match status" value="1"/>
</dbReference>
<dbReference type="Pfam" id="PF00133">
    <property type="entry name" value="tRNA-synt_1"/>
    <property type="match status" value="1"/>
</dbReference>
<dbReference type="Pfam" id="PF06827">
    <property type="entry name" value="zf-FPG_IleRS"/>
    <property type="match status" value="1"/>
</dbReference>
<dbReference type="PRINTS" id="PR00984">
    <property type="entry name" value="TRNASYNTHILE"/>
</dbReference>
<dbReference type="SUPFAM" id="SSF47323">
    <property type="entry name" value="Anticodon-binding domain of a subclass of class I aminoacyl-tRNA synthetases"/>
    <property type="match status" value="1"/>
</dbReference>
<dbReference type="SUPFAM" id="SSF52374">
    <property type="entry name" value="Nucleotidylyl transferase"/>
    <property type="match status" value="1"/>
</dbReference>
<dbReference type="SUPFAM" id="SSF50677">
    <property type="entry name" value="ValRS/IleRS/LeuRS editing domain"/>
    <property type="match status" value="1"/>
</dbReference>
<dbReference type="PROSITE" id="PS00178">
    <property type="entry name" value="AA_TRNA_LIGASE_I"/>
    <property type="match status" value="1"/>
</dbReference>